<feature type="chain" id="PRO_1000049032" description="Large ribosomal subunit protein bL20">
    <location>
        <begin position="1"/>
        <end position="115"/>
    </location>
</feature>
<proteinExistence type="inferred from homology"/>
<dbReference type="EMBL" id="CP000576">
    <property type="protein sequence ID" value="ABO18475.1"/>
    <property type="molecule type" value="Genomic_DNA"/>
</dbReference>
<dbReference type="RefSeq" id="WP_011863757.1">
    <property type="nucleotide sequence ID" value="NC_009091.1"/>
</dbReference>
<dbReference type="SMR" id="A3PFF0"/>
<dbReference type="STRING" id="167546.P9301_18521"/>
<dbReference type="KEGG" id="pmg:P9301_18521"/>
<dbReference type="eggNOG" id="COG0292">
    <property type="taxonomic scope" value="Bacteria"/>
</dbReference>
<dbReference type="HOGENOM" id="CLU_123265_0_1_3"/>
<dbReference type="OrthoDB" id="9808966at2"/>
<dbReference type="Proteomes" id="UP000001430">
    <property type="component" value="Chromosome"/>
</dbReference>
<dbReference type="GO" id="GO:1990904">
    <property type="term" value="C:ribonucleoprotein complex"/>
    <property type="evidence" value="ECO:0007669"/>
    <property type="project" value="UniProtKB-KW"/>
</dbReference>
<dbReference type="GO" id="GO:0005840">
    <property type="term" value="C:ribosome"/>
    <property type="evidence" value="ECO:0007669"/>
    <property type="project" value="UniProtKB-KW"/>
</dbReference>
<dbReference type="GO" id="GO:0019843">
    <property type="term" value="F:rRNA binding"/>
    <property type="evidence" value="ECO:0007669"/>
    <property type="project" value="UniProtKB-UniRule"/>
</dbReference>
<dbReference type="GO" id="GO:0003735">
    <property type="term" value="F:structural constituent of ribosome"/>
    <property type="evidence" value="ECO:0007669"/>
    <property type="project" value="InterPro"/>
</dbReference>
<dbReference type="GO" id="GO:0000027">
    <property type="term" value="P:ribosomal large subunit assembly"/>
    <property type="evidence" value="ECO:0007669"/>
    <property type="project" value="UniProtKB-UniRule"/>
</dbReference>
<dbReference type="GO" id="GO:0006412">
    <property type="term" value="P:translation"/>
    <property type="evidence" value="ECO:0007669"/>
    <property type="project" value="InterPro"/>
</dbReference>
<dbReference type="CDD" id="cd07026">
    <property type="entry name" value="Ribosomal_L20"/>
    <property type="match status" value="1"/>
</dbReference>
<dbReference type="FunFam" id="1.10.1900.20:FF:000001">
    <property type="entry name" value="50S ribosomal protein L20"/>
    <property type="match status" value="1"/>
</dbReference>
<dbReference type="Gene3D" id="6.10.160.10">
    <property type="match status" value="1"/>
</dbReference>
<dbReference type="Gene3D" id="1.10.1900.20">
    <property type="entry name" value="Ribosomal protein L20"/>
    <property type="match status" value="1"/>
</dbReference>
<dbReference type="HAMAP" id="MF_00382">
    <property type="entry name" value="Ribosomal_bL20"/>
    <property type="match status" value="1"/>
</dbReference>
<dbReference type="InterPro" id="IPR005813">
    <property type="entry name" value="Ribosomal_bL20"/>
</dbReference>
<dbReference type="InterPro" id="IPR049946">
    <property type="entry name" value="RIBOSOMAL_L20_CS"/>
</dbReference>
<dbReference type="InterPro" id="IPR035566">
    <property type="entry name" value="Ribosomal_protein_bL20_C"/>
</dbReference>
<dbReference type="NCBIfam" id="TIGR01032">
    <property type="entry name" value="rplT_bact"/>
    <property type="match status" value="1"/>
</dbReference>
<dbReference type="PANTHER" id="PTHR10986">
    <property type="entry name" value="39S RIBOSOMAL PROTEIN L20"/>
    <property type="match status" value="1"/>
</dbReference>
<dbReference type="Pfam" id="PF00453">
    <property type="entry name" value="Ribosomal_L20"/>
    <property type="match status" value="1"/>
</dbReference>
<dbReference type="PRINTS" id="PR00062">
    <property type="entry name" value="RIBOSOMALL20"/>
</dbReference>
<dbReference type="SUPFAM" id="SSF74731">
    <property type="entry name" value="Ribosomal protein L20"/>
    <property type="match status" value="1"/>
</dbReference>
<dbReference type="PROSITE" id="PS00937">
    <property type="entry name" value="RIBOSOMAL_L20"/>
    <property type="match status" value="1"/>
</dbReference>
<reference key="1">
    <citation type="journal article" date="2007" name="PLoS Genet.">
        <title>Patterns and implications of gene gain and loss in the evolution of Prochlorococcus.</title>
        <authorList>
            <person name="Kettler G.C."/>
            <person name="Martiny A.C."/>
            <person name="Huang K."/>
            <person name="Zucker J."/>
            <person name="Coleman M.L."/>
            <person name="Rodrigue S."/>
            <person name="Chen F."/>
            <person name="Lapidus A."/>
            <person name="Ferriera S."/>
            <person name="Johnson J."/>
            <person name="Steglich C."/>
            <person name="Church G.M."/>
            <person name="Richardson P."/>
            <person name="Chisholm S.W."/>
        </authorList>
    </citation>
    <scope>NUCLEOTIDE SEQUENCE [LARGE SCALE GENOMIC DNA]</scope>
    <source>
        <strain>MIT 9301</strain>
    </source>
</reference>
<comment type="function">
    <text evidence="1">Binds directly to 23S ribosomal RNA and is necessary for the in vitro assembly process of the 50S ribosomal subunit. It is not involved in the protein synthesizing functions of that subunit.</text>
</comment>
<comment type="similarity">
    <text evidence="1">Belongs to the bacterial ribosomal protein bL20 family.</text>
</comment>
<evidence type="ECO:0000255" key="1">
    <source>
        <dbReference type="HAMAP-Rule" id="MF_00382"/>
    </source>
</evidence>
<evidence type="ECO:0000305" key="2"/>
<accession>A3PFF0</accession>
<gene>
    <name evidence="1" type="primary">rplT</name>
    <name evidence="1" type="synonym">rpl20</name>
    <name type="ordered locus">P9301_18521</name>
</gene>
<sequence>MARVKRGNIARKRRNKILNLAKGFIGGNKNLFRTANQRVMKALCNAYRDRRRRKRDFRRLWISRINASARINGTNYSKLINGMKNAEIIINRKMLAQLALNDPKCFEKIVSSVSN</sequence>
<name>RL20_PROM0</name>
<organism>
    <name type="scientific">Prochlorococcus marinus (strain MIT 9301)</name>
    <dbReference type="NCBI Taxonomy" id="167546"/>
    <lineage>
        <taxon>Bacteria</taxon>
        <taxon>Bacillati</taxon>
        <taxon>Cyanobacteriota</taxon>
        <taxon>Cyanophyceae</taxon>
        <taxon>Synechococcales</taxon>
        <taxon>Prochlorococcaceae</taxon>
        <taxon>Prochlorococcus</taxon>
    </lineage>
</organism>
<protein>
    <recommendedName>
        <fullName evidence="1">Large ribosomal subunit protein bL20</fullName>
    </recommendedName>
    <alternativeName>
        <fullName evidence="2">50S ribosomal protein L20</fullName>
    </alternativeName>
</protein>
<keyword id="KW-1185">Reference proteome</keyword>
<keyword id="KW-0687">Ribonucleoprotein</keyword>
<keyword id="KW-0689">Ribosomal protein</keyword>
<keyword id="KW-0694">RNA-binding</keyword>
<keyword id="KW-0699">rRNA-binding</keyword>